<gene>
    <name type="primary">hoxU</name>
</gene>
<geneLocation type="plasmid"/>
<dbReference type="EC" id="1.12.1.2"/>
<dbReference type="SMR" id="P22659"/>
<dbReference type="GO" id="GO:0005737">
    <property type="term" value="C:cytoplasm"/>
    <property type="evidence" value="ECO:0007669"/>
    <property type="project" value="UniProtKB-SubCell"/>
</dbReference>
<dbReference type="GO" id="GO:0051537">
    <property type="term" value="F:2 iron, 2 sulfur cluster binding"/>
    <property type="evidence" value="ECO:0007669"/>
    <property type="project" value="UniProtKB-KW"/>
</dbReference>
<dbReference type="GO" id="GO:0051539">
    <property type="term" value="F:4 iron, 4 sulfur cluster binding"/>
    <property type="evidence" value="ECO:0007669"/>
    <property type="project" value="UniProtKB-KW"/>
</dbReference>
<dbReference type="GO" id="GO:0047985">
    <property type="term" value="F:hydrogen dehydrogenase activity"/>
    <property type="evidence" value="ECO:0007669"/>
    <property type="project" value="UniProtKB-EC"/>
</dbReference>
<dbReference type="GO" id="GO:0046872">
    <property type="term" value="F:metal ion binding"/>
    <property type="evidence" value="ECO:0007669"/>
    <property type="project" value="UniProtKB-KW"/>
</dbReference>
<dbReference type="Gene3D" id="3.10.20.740">
    <property type="match status" value="1"/>
</dbReference>
<dbReference type="InterPro" id="IPR036010">
    <property type="entry name" value="2Fe-2S_ferredoxin-like_sf"/>
</dbReference>
<dbReference type="SUPFAM" id="SSF54292">
    <property type="entry name" value="2Fe-2S ferredoxin-like"/>
    <property type="match status" value="1"/>
</dbReference>
<organism>
    <name type="scientific">Rhodococcus opacus</name>
    <name type="common">Nocardia opaca</name>
    <dbReference type="NCBI Taxonomy" id="37919"/>
    <lineage>
        <taxon>Bacteria</taxon>
        <taxon>Bacillati</taxon>
        <taxon>Actinomycetota</taxon>
        <taxon>Actinomycetes</taxon>
        <taxon>Mycobacteriales</taxon>
        <taxon>Nocardiaceae</taxon>
        <taxon>Rhodococcus</taxon>
    </lineage>
</organism>
<accession>P22659</accession>
<proteinExistence type="evidence at protein level"/>
<keyword id="KW-0001">2Fe-2S</keyword>
<keyword id="KW-0004">4Fe-4S</keyword>
<keyword id="KW-0963">Cytoplasm</keyword>
<keyword id="KW-0903">Direct protein sequencing</keyword>
<keyword id="KW-0285">Flavoprotein</keyword>
<keyword id="KW-0288">FMN</keyword>
<keyword id="KW-0408">Iron</keyword>
<keyword id="KW-0411">Iron-sulfur</keyword>
<keyword id="KW-0479">Metal-binding</keyword>
<keyword id="KW-0520">NAD</keyword>
<keyword id="KW-0560">Oxidoreductase</keyword>
<keyword id="KW-0614">Plasmid</keyword>
<comment type="function">
    <text>Subunits alpha and gamma of HoxS constitute an NADH--oxidoreductase.</text>
</comment>
<comment type="catalytic activity">
    <reaction>
        <text>H2 + NAD(+) = NADH + H(+)</text>
        <dbReference type="Rhea" id="RHEA:24636"/>
        <dbReference type="ChEBI" id="CHEBI:15378"/>
        <dbReference type="ChEBI" id="CHEBI:18276"/>
        <dbReference type="ChEBI" id="CHEBI:57540"/>
        <dbReference type="ChEBI" id="CHEBI:57945"/>
        <dbReference type="EC" id="1.12.1.2"/>
    </reaction>
</comment>
<comment type="cofactor">
    <cofactor evidence="2">
        <name>[4Fe-4S] cluster</name>
        <dbReference type="ChEBI" id="CHEBI:49883"/>
    </cofactor>
    <text evidence="2">Binds 3 [4Fe-4S] clusters per subunit.</text>
</comment>
<comment type="subunit">
    <text>Tetramer of an alpha and a gamma subunits (flavin-containing dimer), and a delta and a nickel-containing beta subunits (hydrogenase dimer).</text>
</comment>
<comment type="subcellular location">
    <subcellularLocation>
        <location>Cytoplasm</location>
    </subcellularLocation>
</comment>
<comment type="similarity">
    <text evidence="2">Belongs to the complex I 75 kDa subunit family.</text>
</comment>
<name>HOXU_RHOOP</name>
<reference key="1">
    <citation type="journal article" date="1989" name="Eur. J. Biochem.">
        <title>Comparison of the NH2-terminal amino acid sequences of the four non-identical subunits of the NAD-linked hydrogenases from Nocardia opaca 1b and Alcaligenes eutrophus H16.</title>
        <authorList>
            <person name="Zaborosch C."/>
            <person name="Schneider K."/>
            <person name="Schlegel H.G."/>
            <person name="Kratzin H."/>
        </authorList>
    </citation>
    <scope>PROTEIN SEQUENCE</scope>
    <source>
        <strain>1B</strain>
    </source>
</reference>
<sequence>SIEIEIDGVTVTTEESRTLVDVAAEAGVYIPTL</sequence>
<evidence type="ECO:0000255" key="1">
    <source>
        <dbReference type="PROSITE-ProRule" id="PRU00465"/>
    </source>
</evidence>
<evidence type="ECO:0000305" key="2"/>
<feature type="chain" id="PRO_0000118539" description="NAD-reducing hydrogenase HoxS subunit gamma">
    <location>
        <begin position="1"/>
        <end position="33" status="greater than"/>
    </location>
</feature>
<feature type="domain" description="2Fe-2S ferredoxin-type" evidence="1">
    <location>
        <begin position="1"/>
        <end position="33" status="greater than"/>
    </location>
</feature>
<feature type="non-terminal residue">
    <location>
        <position position="33"/>
    </location>
</feature>
<protein>
    <recommendedName>
        <fullName>NAD-reducing hydrogenase HoxS subunit gamma</fullName>
        <ecNumber>1.12.1.2</ecNumber>
    </recommendedName>
</protein>